<name>AFAD_MOUSE</name>
<organism>
    <name type="scientific">Mus musculus</name>
    <name type="common">Mouse</name>
    <dbReference type="NCBI Taxonomy" id="10090"/>
    <lineage>
        <taxon>Eukaryota</taxon>
        <taxon>Metazoa</taxon>
        <taxon>Chordata</taxon>
        <taxon>Craniata</taxon>
        <taxon>Vertebrata</taxon>
        <taxon>Euteleostomi</taxon>
        <taxon>Mammalia</taxon>
        <taxon>Eutheria</taxon>
        <taxon>Euarchontoglires</taxon>
        <taxon>Glires</taxon>
        <taxon>Rodentia</taxon>
        <taxon>Myomorpha</taxon>
        <taxon>Muroidea</taxon>
        <taxon>Muridae</taxon>
        <taxon>Murinae</taxon>
        <taxon>Mus</taxon>
        <taxon>Mus</taxon>
    </lineage>
</organism>
<sequence length="1820" mass="206499">MSAGGRDEERRKLADIIHHWNANRLDLFEISQPTEDLEFHGVMRFYFQDKAAGNFATKCIRVSSTATTQDVIETLAEKFRPDMRMLSSPKYSLYEVHVSGERRLDIDEKPLVVQLNWNKDDREGRFVLKNENDAIPAKKAQSNGPEKQEKEGVIQNFKRTLSKKEKKEKKKKEKEALRQASDKEERPSQGDDSENSRLAAEVYKDMPETSFTRTISNPEVVMKRRRQQKLEKRMQEFRSSDGRPDSGGTLRIYADSLKPNIPYKTILLSTTDTADFAVAESLEKYGLEKENPKDYCIARVMLPPGAQHSDERGAKEIILDDDECPLQIFREWPSDKGILVFQLKRRPPDYIPKKMKKHVEGKSLKGKDRADGSGYGSALPPEKLPYLVELSPGRRNHFAYYSYHTYEDGSDSRDKPKLYRLQLSVTEVGTEKFDDNSIQLFGPGIQPHHCDLTNMDGVVTVTPRSMDAETYVDGQRISETTMLQSGMRLQFGTSHVFKFVDPIQDHVLSKRSVDGGLMVKGPRHKPGAVQETTFELGGDVHSGTALPASRSTTRLDSDRVSSASSTAERGMVKPMIRLDQEQEYRRRENRTQDATGPELILPASIEFRESSEDSFLSAIINYTNSSTVHFKLSPTYVLYMACRYVLSSQHRPDISPTERTHKAIAVVNKMVSMMEGVIQKQKNIAGALAFWMANASELLNFIKQDRDLSRITLDAQDVLAHLVQMAFKYLVHCLQSELNNYMPAFLDDPEENSLQRPKIDDVLHTLTGAMSLLRRCRVNAALTIQLFSQLFHFINMWLFNRLVTDPDSGLCSHYWGAIIRQQLGHIEAWAEKQGLELAADCHLSRIVQATTLLTMDKYVPDDIPNINSTCFKLNSLQLQALLQNYHCAPDEPFIPTDLIENVVAVAENTADELARSDGRDVQLEEDPDLQLPFLLPEDGYSCDVVRNIPNGLQEFLDPLCQRGFCRLVPHTRSPGTWTIYFEGADYESHLMRENAELAQPLRKEPEIITVTLKKQNGMGLSIVAAKGAGQDKLGIYVKSVVKGGAADVDGRLAAGDQLLSVDGRSLVGLSQERAAELMTRTSSVVTLEVAKQGAIYHGLATLLNQPSPMMQRISDRRGSGKPRPKSEGFELYNNSAQNGSPESPQMPWTEYSEPKKLPGDDRLMKNRADHRSSPNVANQPPSPGGKGPYTSGTAAKITSVSTGNLCTEEQSPPPRPEAYPIPTQTYTREYFTFPASKSQDRMAPPQSQWPNYEEKPHVHTESNHSSIAIQRVTRSQEELREEKVYQLERHRVEAGMDRKCDSDMWINQSSSVESSTSSQEHLNHSSKSVTPASTLTKSGPGRWKTPAAVLPTPVAVSQPIRTDLPPPPPPPPVHYTSEFDGIPMDLPLPPPPANQAGPQSAQVAAAEWKKREEHQRWYEKEKARLEEERERKRREQERKLGQMRSQTLNPASFSPLATQAKPEKPSTLQRPQETVIRELQPQQQPRTIERKDLQYITISKEELSSGDSLSPDPWKRDAREKLEKQQQMHIVDMLSKEIHELQNKVDRTAEESDRLRKLMLEWQFQKRLQESKQKDEDDDEEEDDDVDTMLIMQRLEAERRARMQDEERRRQQQLEEMRKREAEDRVRQEEDGRHQEEERVKRDAEEKRRQEEGYYSRLEAERRRQHEEAARRLLEPEEPGLSRPPLPRDYEPPSLSSAPCAPPPPPQRNASYLKTQVLSPDSLFTAKFVAYDEEEEDYGPAGPNSYSGSAGTAVGAYDAPREAREKLTRSQDADLPGSSGAPENLTFKERQRLFSQGQDVSDKVKASRKLTELENELNTK</sequence>
<comment type="function">
    <text evidence="2 3 9">Belongs to an adhesion system, probably together with the E-cadherin-catenin system, which plays a role in the organization of homotypic, interneuronal and heterotypic cell-cell adherens junctions (AJs) (By similarity). Nectin- and actin-filament-binding protein that connects nectin to the actin cytoskeleton (By similarity). May play a key role in the organization of epithelial structures of the embryonic ectoderm (PubMed:10477764). Essential for the organization of adherens junctions (By similarity).</text>
</comment>
<comment type="subunit">
    <text evidence="1 10">Homodimer. Interacts with F-actin, nectin and NECTIN3. Essential for the association of nectin and E-cadherin. Isoform 2/s-afadin does not interact with F-actin. Interacts with ZO-1 and occludin, but probably in an indirect manner. Interacts with RIT1, RIT2, NRXN1 and BCR (By similarity). Interacts with ADAM10; the interaction locks ADAM10 at adherens junctions following ADAM10 recruitment to adherens junctions by TSPAN33 (PubMed:30463011).</text>
</comment>
<comment type="subcellular location">
    <subcellularLocation>
        <location evidence="10">Cell junction</location>
        <location evidence="10">Adherens junction</location>
    </subcellularLocation>
    <text evidence="2">Not found at cell-matrix AJs.</text>
</comment>
<comment type="alternative products">
    <event type="alternative splicing"/>
    <isoform>
        <id>Q9QZQ1-3</id>
        <name>3</name>
        <sequence type="displayed"/>
    </isoform>
    <isoform>
        <id>Q9QZQ1-2</id>
        <name>1</name>
        <name>l-afadin</name>
        <sequence type="described" ref="VSP_026731"/>
    </isoform>
    <isoform>
        <id>Q9QZQ1-1</id>
        <name>2</name>
        <name>s-afadin</name>
        <sequence type="not described"/>
    </isoform>
</comment>
<comment type="tissue specificity">
    <text evidence="9">Isoform 1 is expressed only in a restricted set of epithelial structures during early embryogenesis.</text>
</comment>
<comment type="developmental stage">
    <text evidence="9">Highly expressed at restricted set of epithelial structures and highly concentrated at their junctional complex regions. At 6.5 dpc, localized at the most apical regions of cell-cell adhesion sites of the entire embryonic ectoderm; not detected in the extraembryonic regions. At 7.0 dpc, expressed in the primitive streak and the migrating paraxial mesoderm. At 7.5 dpc, highly expressed at the junctional complex regions in the primitive streak region (neuroepithelium) and the neural fold/grove region, but hardly detected in other areas of the ectoderm. By 8.5 dpc, highly expressed in the tail bud, somites and the paraxial mesoderm, concentrated at the junctional complex regions in neural tube, somites and pericardioperitoneal canal.</text>
</comment>
<comment type="disruption phenotype">
    <text evidence="9">Mice show developmental defects at stages during and after gastrulation, including disorganization of the ectoderm, impaired migration of the mesoderm and loss of somites and other structures derived from both the ectoderm and mesoderm. Cell-cell adherens juntions and tight junctions are improperly organized in the ectoderm-derived cells. No redundancy exists in the function of afadin during gastrulation.</text>
</comment>
<gene>
    <name evidence="13" type="primary">Afdn</name>
    <name type="synonym">Af6</name>
    <name type="synonym">Mllt4</name>
</gene>
<accession>Q9QZQ1</accession>
<proteinExistence type="evidence at protein level"/>
<keyword id="KW-0002">3D-structure</keyword>
<keyword id="KW-0007">Acetylation</keyword>
<keyword id="KW-0025">Alternative splicing</keyword>
<keyword id="KW-0130">Cell adhesion</keyword>
<keyword id="KW-0965">Cell junction</keyword>
<keyword id="KW-0175">Coiled coil</keyword>
<keyword id="KW-0597">Phosphoprotein</keyword>
<keyword id="KW-1185">Reference proteome</keyword>
<keyword id="KW-0677">Repeat</keyword>
<evidence type="ECO:0000250" key="1"/>
<evidence type="ECO:0000250" key="2">
    <source>
        <dbReference type="UniProtKB" id="O35889"/>
    </source>
</evidence>
<evidence type="ECO:0000250" key="3">
    <source>
        <dbReference type="UniProtKB" id="P55196"/>
    </source>
</evidence>
<evidence type="ECO:0000255" key="4"/>
<evidence type="ECO:0000255" key="5">
    <source>
        <dbReference type="PROSITE-ProRule" id="PRU00143"/>
    </source>
</evidence>
<evidence type="ECO:0000255" key="6">
    <source>
        <dbReference type="PROSITE-ProRule" id="PRU00166"/>
    </source>
</evidence>
<evidence type="ECO:0000255" key="7">
    <source>
        <dbReference type="PROSITE-ProRule" id="PRU00503"/>
    </source>
</evidence>
<evidence type="ECO:0000256" key="8">
    <source>
        <dbReference type="SAM" id="MobiDB-lite"/>
    </source>
</evidence>
<evidence type="ECO:0000269" key="9">
    <source>
    </source>
</evidence>
<evidence type="ECO:0000269" key="10">
    <source>
    </source>
</evidence>
<evidence type="ECO:0000303" key="11">
    <source>
    </source>
</evidence>
<evidence type="ECO:0000305" key="12"/>
<evidence type="ECO:0000312" key="13">
    <source>
        <dbReference type="MGI" id="MGI:1314653"/>
    </source>
</evidence>
<evidence type="ECO:0007744" key="14">
    <source>
    </source>
</evidence>
<evidence type="ECO:0007744" key="15">
    <source>
    </source>
</evidence>
<evidence type="ECO:0007744" key="16">
    <source>
    </source>
</evidence>
<evidence type="ECO:0007744" key="17">
    <source>
    </source>
</evidence>
<evidence type="ECO:0007744" key="18">
    <source>
    </source>
</evidence>
<evidence type="ECO:0007829" key="19">
    <source>
        <dbReference type="PDB" id="1WLN"/>
    </source>
</evidence>
<evidence type="ECO:0007829" key="20">
    <source>
        <dbReference type="PDB" id="1WXA"/>
    </source>
</evidence>
<evidence type="ECO:0007829" key="21">
    <source>
        <dbReference type="PDB" id="3AXA"/>
    </source>
</evidence>
<evidence type="ECO:0007829" key="22">
    <source>
        <dbReference type="PDB" id="6AMB"/>
    </source>
</evidence>
<protein>
    <recommendedName>
        <fullName>Afadin</fullName>
    </recommendedName>
    <alternativeName>
        <fullName evidence="13">Afadin adherens junction formation factor</fullName>
    </alternativeName>
    <alternativeName>
        <fullName>Protein Af-6</fullName>
    </alternativeName>
</protein>
<dbReference type="EMBL" id="AC155253">
    <property type="status" value="NOT_ANNOTATED_CDS"/>
    <property type="molecule type" value="Genomic_DNA"/>
</dbReference>
<dbReference type="EMBL" id="CAAA01106165">
    <property type="status" value="NOT_ANNOTATED_CDS"/>
    <property type="molecule type" value="Genomic_DNA"/>
</dbReference>
<dbReference type="EMBL" id="CAAA01134612">
    <property type="status" value="NOT_ANNOTATED_CDS"/>
    <property type="molecule type" value="Genomic_DNA"/>
</dbReference>
<dbReference type="EMBL" id="CAAA01201738">
    <property type="status" value="NOT_ANNOTATED_CDS"/>
    <property type="molecule type" value="Genomic_DNA"/>
</dbReference>
<dbReference type="EMBL" id="CAAA01218165">
    <property type="status" value="NOT_ANNOTATED_CDS"/>
    <property type="molecule type" value="Genomic_DNA"/>
</dbReference>
<dbReference type="EMBL" id="AF172447">
    <property type="protein sequence ID" value="AAD54283.1"/>
    <property type="molecule type" value="mRNA"/>
</dbReference>
<dbReference type="EMBL" id="AK016557">
    <property type="status" value="NOT_ANNOTATED_CDS"/>
    <property type="molecule type" value="mRNA"/>
</dbReference>
<dbReference type="CCDS" id="CCDS49955.1">
    <molecule id="Q9QZQ1-3"/>
</dbReference>
<dbReference type="RefSeq" id="NP_034936.1">
    <molecule id="Q9QZQ1-3"/>
    <property type="nucleotide sequence ID" value="NM_010806.1"/>
</dbReference>
<dbReference type="PDB" id="1WLN">
    <property type="method" value="NMR"/>
    <property type="chains" value="A=381-502"/>
</dbReference>
<dbReference type="PDB" id="1WXA">
    <property type="method" value="NMR"/>
    <property type="chains" value="A=246-348"/>
</dbReference>
<dbReference type="PDB" id="3AXA">
    <property type="method" value="X-ray"/>
    <property type="resolution" value="2.78 A"/>
    <property type="chains" value="A/B=1003-1095"/>
</dbReference>
<dbReference type="PDB" id="6AMB">
    <property type="method" value="X-ray"/>
    <property type="resolution" value="2.50 A"/>
    <property type="chains" value="B=38-136"/>
</dbReference>
<dbReference type="PDB" id="9DVA">
    <property type="method" value="EM"/>
    <property type="resolution" value="3.10 A"/>
    <property type="chains" value="G=1393-1602"/>
</dbReference>
<dbReference type="PDBsum" id="1WLN"/>
<dbReference type="PDBsum" id="1WXA"/>
<dbReference type="PDBsum" id="3AXA"/>
<dbReference type="PDBsum" id="6AMB"/>
<dbReference type="PDBsum" id="9DVA"/>
<dbReference type="BMRB" id="Q9QZQ1"/>
<dbReference type="EMDB" id="EMD-47194"/>
<dbReference type="SMR" id="Q9QZQ1"/>
<dbReference type="BioGRID" id="201438">
    <property type="interactions" value="26"/>
</dbReference>
<dbReference type="DIP" id="DIP-60737N"/>
<dbReference type="FunCoup" id="Q9QZQ1">
    <property type="interactions" value="1557"/>
</dbReference>
<dbReference type="IntAct" id="Q9QZQ1">
    <property type="interactions" value="6"/>
</dbReference>
<dbReference type="MINT" id="Q9QZQ1"/>
<dbReference type="STRING" id="10090.ENSMUSP00000118318"/>
<dbReference type="GlyGen" id="Q9QZQ1">
    <property type="glycosylation" value="2 sites"/>
</dbReference>
<dbReference type="iPTMnet" id="Q9QZQ1"/>
<dbReference type="PhosphoSitePlus" id="Q9QZQ1"/>
<dbReference type="SwissPalm" id="Q9QZQ1"/>
<dbReference type="jPOST" id="Q9QZQ1"/>
<dbReference type="PaxDb" id="10090-ENSMUSP00000118318"/>
<dbReference type="PeptideAtlas" id="Q9QZQ1"/>
<dbReference type="ProteomicsDB" id="281948">
    <molecule id="Q9QZQ1-3"/>
</dbReference>
<dbReference type="ProteomicsDB" id="281949">
    <molecule id="Q9QZQ1-2"/>
</dbReference>
<dbReference type="Pumba" id="Q9QZQ1"/>
<dbReference type="Antibodypedia" id="4608">
    <property type="antibodies" value="263 antibodies from 33 providers"/>
</dbReference>
<dbReference type="DNASU" id="17356"/>
<dbReference type="Ensembl" id="ENSMUST00000139666.8">
    <molecule id="Q9QZQ1-3"/>
    <property type="protein sequence ID" value="ENSMUSP00000118318.2"/>
    <property type="gene ID" value="ENSMUSG00000068036.17"/>
</dbReference>
<dbReference type="Ensembl" id="ENSMUST00000150848.8">
    <molecule id="Q9QZQ1-2"/>
    <property type="protein sequence ID" value="ENSMUSP00000122447.2"/>
    <property type="gene ID" value="ENSMUSG00000068036.17"/>
</dbReference>
<dbReference type="GeneID" id="17356"/>
<dbReference type="KEGG" id="mmu:17356"/>
<dbReference type="UCSC" id="uc008amr.1">
    <molecule id="Q9QZQ1-3"/>
    <property type="organism name" value="mouse"/>
</dbReference>
<dbReference type="AGR" id="MGI:1314653"/>
<dbReference type="CTD" id="4301"/>
<dbReference type="MGI" id="MGI:1314653">
    <property type="gene designation" value="Afdn"/>
</dbReference>
<dbReference type="VEuPathDB" id="HostDB:ENSMUSG00000068036"/>
<dbReference type="eggNOG" id="KOG1892">
    <property type="taxonomic scope" value="Eukaryota"/>
</dbReference>
<dbReference type="GeneTree" id="ENSGT00940000155237"/>
<dbReference type="InParanoid" id="Q9QZQ1"/>
<dbReference type="OMA" id="YRCAQDE"/>
<dbReference type="PhylomeDB" id="Q9QZQ1"/>
<dbReference type="TreeFam" id="TF350731"/>
<dbReference type="Reactome" id="R-MMU-418990">
    <property type="pathway name" value="Adherens junctions interactions"/>
</dbReference>
<dbReference type="BioGRID-ORCS" id="17356">
    <property type="hits" value="2 hits in 48 CRISPR screens"/>
</dbReference>
<dbReference type="CD-CODE" id="CE726F99">
    <property type="entry name" value="Postsynaptic density"/>
</dbReference>
<dbReference type="ChiTaRS" id="Mllt4">
    <property type="organism name" value="mouse"/>
</dbReference>
<dbReference type="EvolutionaryTrace" id="Q9QZQ1"/>
<dbReference type="PRO" id="PR:Q9QZQ1"/>
<dbReference type="Proteomes" id="UP000000589">
    <property type="component" value="Chromosome 17"/>
</dbReference>
<dbReference type="RNAct" id="Q9QZQ1">
    <property type="molecule type" value="protein"/>
</dbReference>
<dbReference type="Bgee" id="ENSMUSG00000068036">
    <property type="expression patterns" value="Expressed in tail skin and 242 other cell types or tissues"/>
</dbReference>
<dbReference type="ExpressionAtlas" id="Q9QZQ1">
    <property type="expression patterns" value="baseline and differential"/>
</dbReference>
<dbReference type="GO" id="GO:0005912">
    <property type="term" value="C:adherens junction"/>
    <property type="evidence" value="ECO:0000314"/>
    <property type="project" value="MGI"/>
</dbReference>
<dbReference type="GO" id="GO:0043296">
    <property type="term" value="C:apical junction complex"/>
    <property type="evidence" value="ECO:0000314"/>
    <property type="project" value="MGI"/>
</dbReference>
<dbReference type="GO" id="GO:0045177">
    <property type="term" value="C:apical part of cell"/>
    <property type="evidence" value="ECO:0000314"/>
    <property type="project" value="MGI"/>
</dbReference>
<dbReference type="GO" id="GO:0030054">
    <property type="term" value="C:cell junction"/>
    <property type="evidence" value="ECO:0000314"/>
    <property type="project" value="MGI"/>
</dbReference>
<dbReference type="GO" id="GO:0005911">
    <property type="term" value="C:cell-cell junction"/>
    <property type="evidence" value="ECO:0000314"/>
    <property type="project" value="ARUK-UCL"/>
</dbReference>
<dbReference type="GO" id="GO:0005737">
    <property type="term" value="C:cytoplasm"/>
    <property type="evidence" value="ECO:0000314"/>
    <property type="project" value="MGI"/>
</dbReference>
<dbReference type="GO" id="GO:0098686">
    <property type="term" value="C:hippocampal mossy fiber to CA3 synapse"/>
    <property type="evidence" value="ECO:0000314"/>
    <property type="project" value="SynGO"/>
</dbReference>
<dbReference type="GO" id="GO:0046930">
    <property type="term" value="C:pore complex"/>
    <property type="evidence" value="ECO:0000315"/>
    <property type="project" value="UniProtKB"/>
</dbReference>
<dbReference type="GO" id="GO:0098839">
    <property type="term" value="C:postsynaptic density membrane"/>
    <property type="evidence" value="ECO:0000314"/>
    <property type="project" value="SynGO"/>
</dbReference>
<dbReference type="GO" id="GO:0048787">
    <property type="term" value="C:presynaptic active zone membrane"/>
    <property type="evidence" value="ECO:0000314"/>
    <property type="project" value="SynGO"/>
</dbReference>
<dbReference type="GO" id="GO:0050839">
    <property type="term" value="F:cell adhesion molecule binding"/>
    <property type="evidence" value="ECO:0000353"/>
    <property type="project" value="BHF-UCL"/>
</dbReference>
<dbReference type="GO" id="GO:0034334">
    <property type="term" value="P:adherens junction maintenance"/>
    <property type="evidence" value="ECO:0000315"/>
    <property type="project" value="MGI"/>
</dbReference>
<dbReference type="GO" id="GO:0048854">
    <property type="term" value="P:brain morphogenesis"/>
    <property type="evidence" value="ECO:0000316"/>
    <property type="project" value="MGI"/>
</dbReference>
<dbReference type="GO" id="GO:0044331">
    <property type="term" value="P:cell-cell adhesion mediated by cadherin"/>
    <property type="evidence" value="ECO:0000315"/>
    <property type="project" value="ARUK-UCL"/>
</dbReference>
<dbReference type="GO" id="GO:0021987">
    <property type="term" value="P:cerebral cortex development"/>
    <property type="evidence" value="ECO:0000315"/>
    <property type="project" value="MGI"/>
</dbReference>
<dbReference type="GO" id="GO:0061951">
    <property type="term" value="P:establishment of protein localization to plasma membrane"/>
    <property type="evidence" value="ECO:0000315"/>
    <property type="project" value="ARUK-UCL"/>
</dbReference>
<dbReference type="GO" id="GO:0048872">
    <property type="term" value="P:homeostasis of number of cells"/>
    <property type="evidence" value="ECO:0000316"/>
    <property type="project" value="MGI"/>
</dbReference>
<dbReference type="GO" id="GO:0060563">
    <property type="term" value="P:neuroepithelial cell differentiation"/>
    <property type="evidence" value="ECO:0000316"/>
    <property type="project" value="MGI"/>
</dbReference>
<dbReference type="GO" id="GO:0046931">
    <property type="term" value="P:pore complex assembly"/>
    <property type="evidence" value="ECO:0000315"/>
    <property type="project" value="UniProtKB"/>
</dbReference>
<dbReference type="GO" id="GO:1902414">
    <property type="term" value="P:protein localization to cell junction"/>
    <property type="evidence" value="ECO:0000315"/>
    <property type="project" value="MGI"/>
</dbReference>
<dbReference type="GO" id="GO:0060019">
    <property type="term" value="P:radial glial cell differentiation"/>
    <property type="evidence" value="ECO:0000316"/>
    <property type="project" value="MGI"/>
</dbReference>
<dbReference type="GO" id="GO:0070445">
    <property type="term" value="P:regulation of oligodendrocyte progenitor proliferation"/>
    <property type="evidence" value="ECO:0000316"/>
    <property type="project" value="MGI"/>
</dbReference>
<dbReference type="GO" id="GO:0150052">
    <property type="term" value="P:regulation of postsynapse assembly"/>
    <property type="evidence" value="ECO:0000314"/>
    <property type="project" value="SynGO"/>
</dbReference>
<dbReference type="GO" id="GO:0007165">
    <property type="term" value="P:signal transduction"/>
    <property type="evidence" value="ECO:0007669"/>
    <property type="project" value="InterPro"/>
</dbReference>
<dbReference type="GO" id="GO:0021537">
    <property type="term" value="P:telencephalon development"/>
    <property type="evidence" value="ECO:0000316"/>
    <property type="project" value="MGI"/>
</dbReference>
<dbReference type="CDD" id="cd22711">
    <property type="entry name" value="FHA_AFDN"/>
    <property type="match status" value="1"/>
</dbReference>
<dbReference type="CDD" id="cd15471">
    <property type="entry name" value="Myo5p-like_CBD_afadin"/>
    <property type="match status" value="1"/>
</dbReference>
<dbReference type="CDD" id="cd06789">
    <property type="entry name" value="PDZ_AFDN-like"/>
    <property type="match status" value="1"/>
</dbReference>
<dbReference type="CDD" id="cd01782">
    <property type="entry name" value="RA1_Afadin"/>
    <property type="match status" value="1"/>
</dbReference>
<dbReference type="CDD" id="cd01781">
    <property type="entry name" value="RA2_Afadin"/>
    <property type="match status" value="1"/>
</dbReference>
<dbReference type="CDD" id="cd22265">
    <property type="entry name" value="UDM1_RNF168"/>
    <property type="match status" value="1"/>
</dbReference>
<dbReference type="FunFam" id="2.30.42.10:FF:000032">
    <property type="entry name" value="Afadin isoform A"/>
    <property type="match status" value="1"/>
</dbReference>
<dbReference type="FunFam" id="3.10.20.90:FF:000033">
    <property type="entry name" value="afadin isoform X1"/>
    <property type="match status" value="1"/>
</dbReference>
<dbReference type="FunFam" id="2.60.200.20:FF:000006">
    <property type="entry name" value="Afadin, adherens junction formation factor"/>
    <property type="match status" value="1"/>
</dbReference>
<dbReference type="FunFam" id="3.10.20.90:FF:000025">
    <property type="entry name" value="Afadin, adherens junction formation factor"/>
    <property type="match status" value="1"/>
</dbReference>
<dbReference type="Gene3D" id="2.30.42.10">
    <property type="match status" value="1"/>
</dbReference>
<dbReference type="Gene3D" id="2.60.200.20">
    <property type="match status" value="1"/>
</dbReference>
<dbReference type="Gene3D" id="3.10.20.90">
    <property type="entry name" value="Phosphatidylinositol 3-kinase Catalytic Subunit, Chain A, domain 1"/>
    <property type="match status" value="2"/>
</dbReference>
<dbReference type="InterPro" id="IPR028842">
    <property type="entry name" value="Afadin"/>
</dbReference>
<dbReference type="InterPro" id="IPR037977">
    <property type="entry name" value="CBD_Afadin"/>
</dbReference>
<dbReference type="InterPro" id="IPR002710">
    <property type="entry name" value="Dilute_dom"/>
</dbReference>
<dbReference type="InterPro" id="IPR000253">
    <property type="entry name" value="FHA_dom"/>
</dbReference>
<dbReference type="InterPro" id="IPR001478">
    <property type="entry name" value="PDZ"/>
</dbReference>
<dbReference type="InterPro" id="IPR036034">
    <property type="entry name" value="PDZ_sf"/>
</dbReference>
<dbReference type="InterPro" id="IPR000159">
    <property type="entry name" value="RA_dom"/>
</dbReference>
<dbReference type="InterPro" id="IPR008984">
    <property type="entry name" value="SMAD_FHA_dom_sf"/>
</dbReference>
<dbReference type="InterPro" id="IPR029071">
    <property type="entry name" value="Ubiquitin-like_domsf"/>
</dbReference>
<dbReference type="PANTHER" id="PTHR10398">
    <property type="entry name" value="AFADIN"/>
    <property type="match status" value="1"/>
</dbReference>
<dbReference type="PANTHER" id="PTHR10398:SF2">
    <property type="entry name" value="AFADIN"/>
    <property type="match status" value="1"/>
</dbReference>
<dbReference type="Pfam" id="PF01843">
    <property type="entry name" value="DIL"/>
    <property type="match status" value="1"/>
</dbReference>
<dbReference type="Pfam" id="PF00498">
    <property type="entry name" value="FHA"/>
    <property type="match status" value="1"/>
</dbReference>
<dbReference type="Pfam" id="PF00595">
    <property type="entry name" value="PDZ"/>
    <property type="match status" value="1"/>
</dbReference>
<dbReference type="Pfam" id="PF00788">
    <property type="entry name" value="RA"/>
    <property type="match status" value="2"/>
</dbReference>
<dbReference type="SMART" id="SM01132">
    <property type="entry name" value="DIL"/>
    <property type="match status" value="1"/>
</dbReference>
<dbReference type="SMART" id="SM00240">
    <property type="entry name" value="FHA"/>
    <property type="match status" value="1"/>
</dbReference>
<dbReference type="SMART" id="SM00228">
    <property type="entry name" value="PDZ"/>
    <property type="match status" value="1"/>
</dbReference>
<dbReference type="SMART" id="SM00314">
    <property type="entry name" value="RA"/>
    <property type="match status" value="2"/>
</dbReference>
<dbReference type="SUPFAM" id="SSF50156">
    <property type="entry name" value="PDZ domain-like"/>
    <property type="match status" value="1"/>
</dbReference>
<dbReference type="SUPFAM" id="SSF49879">
    <property type="entry name" value="SMAD/FHA domain"/>
    <property type="match status" value="1"/>
</dbReference>
<dbReference type="SUPFAM" id="SSF54236">
    <property type="entry name" value="Ubiquitin-like"/>
    <property type="match status" value="2"/>
</dbReference>
<dbReference type="PROSITE" id="PS51126">
    <property type="entry name" value="DILUTE"/>
    <property type="match status" value="1"/>
</dbReference>
<dbReference type="PROSITE" id="PS50106">
    <property type="entry name" value="PDZ"/>
    <property type="match status" value="1"/>
</dbReference>
<dbReference type="PROSITE" id="PS50200">
    <property type="entry name" value="RA"/>
    <property type="match status" value="2"/>
</dbReference>
<reference key="1">
    <citation type="journal article" date="2009" name="PLoS Biol.">
        <title>Lineage-specific biology revealed by a finished genome assembly of the mouse.</title>
        <authorList>
            <person name="Church D.M."/>
            <person name="Goodstadt L."/>
            <person name="Hillier L.W."/>
            <person name="Zody M.C."/>
            <person name="Goldstein S."/>
            <person name="She X."/>
            <person name="Bult C.J."/>
            <person name="Agarwala R."/>
            <person name="Cherry J.L."/>
            <person name="DiCuccio M."/>
            <person name="Hlavina W."/>
            <person name="Kapustin Y."/>
            <person name="Meric P."/>
            <person name="Maglott D."/>
            <person name="Birtle Z."/>
            <person name="Marques A.C."/>
            <person name="Graves T."/>
            <person name="Zhou S."/>
            <person name="Teague B."/>
            <person name="Potamousis K."/>
            <person name="Churas C."/>
            <person name="Place M."/>
            <person name="Herschleb J."/>
            <person name="Runnheim R."/>
            <person name="Forrest D."/>
            <person name="Amos-Landgraf J."/>
            <person name="Schwartz D.C."/>
            <person name="Cheng Z."/>
            <person name="Lindblad-Toh K."/>
            <person name="Eichler E.E."/>
            <person name="Ponting C.P."/>
        </authorList>
    </citation>
    <scope>NUCLEOTIDE SEQUENCE [LARGE SCALE GENOMIC DNA]</scope>
    <source>
        <strain>C57BL/6J</strain>
    </source>
</reference>
<reference key="2">
    <citation type="journal article" date="1999" name="J. Cell Biol.">
        <title>Afadin: a key molecule essential for structural organization of cell-cell junctions of polarized epithelia during embryogenesis.</title>
        <authorList>
            <person name="Ikeda W."/>
            <person name="Nakanishi H."/>
            <person name="Miyoshi J."/>
            <person name="Mandai K."/>
            <person name="Ishizaki H."/>
            <person name="Tanaka M."/>
            <person name="Togawa A."/>
            <person name="Takahashi K."/>
            <person name="Nishioka H."/>
            <person name="Yoshida H."/>
            <person name="Mizoguchi A."/>
            <person name="Nishikawa S."/>
            <person name="Takai Y."/>
        </authorList>
    </citation>
    <scope>NUCLEOTIDE SEQUENCE [MRNA] OF 1-320 (ISOFORM 1)</scope>
    <scope>FUNCTION</scope>
    <scope>TISSUE SPECIFICITY</scope>
    <scope>DEVELOPMENTAL STAGE</scope>
    <scope>DISRUPTION PHENOTYPE</scope>
    <source>
        <strain>C57BL/6J</strain>
    </source>
</reference>
<reference key="3">
    <citation type="journal article" date="2005" name="Science">
        <title>The transcriptional landscape of the mammalian genome.</title>
        <authorList>
            <person name="Carninci P."/>
            <person name="Kasukawa T."/>
            <person name="Katayama S."/>
            <person name="Gough J."/>
            <person name="Frith M.C."/>
            <person name="Maeda N."/>
            <person name="Oyama R."/>
            <person name="Ravasi T."/>
            <person name="Lenhard B."/>
            <person name="Wells C."/>
            <person name="Kodzius R."/>
            <person name="Shimokawa K."/>
            <person name="Bajic V.B."/>
            <person name="Brenner S.E."/>
            <person name="Batalov S."/>
            <person name="Forrest A.R."/>
            <person name="Zavolan M."/>
            <person name="Davis M.J."/>
            <person name="Wilming L.G."/>
            <person name="Aidinis V."/>
            <person name="Allen J.E."/>
            <person name="Ambesi-Impiombato A."/>
            <person name="Apweiler R."/>
            <person name="Aturaliya R.N."/>
            <person name="Bailey T.L."/>
            <person name="Bansal M."/>
            <person name="Baxter L."/>
            <person name="Beisel K.W."/>
            <person name="Bersano T."/>
            <person name="Bono H."/>
            <person name="Chalk A.M."/>
            <person name="Chiu K.P."/>
            <person name="Choudhary V."/>
            <person name="Christoffels A."/>
            <person name="Clutterbuck D.R."/>
            <person name="Crowe M.L."/>
            <person name="Dalla E."/>
            <person name="Dalrymple B.P."/>
            <person name="de Bono B."/>
            <person name="Della Gatta G."/>
            <person name="di Bernardo D."/>
            <person name="Down T."/>
            <person name="Engstrom P."/>
            <person name="Fagiolini M."/>
            <person name="Faulkner G."/>
            <person name="Fletcher C.F."/>
            <person name="Fukushima T."/>
            <person name="Furuno M."/>
            <person name="Futaki S."/>
            <person name="Gariboldi M."/>
            <person name="Georgii-Hemming P."/>
            <person name="Gingeras T.R."/>
            <person name="Gojobori T."/>
            <person name="Green R.E."/>
            <person name="Gustincich S."/>
            <person name="Harbers M."/>
            <person name="Hayashi Y."/>
            <person name="Hensch T.K."/>
            <person name="Hirokawa N."/>
            <person name="Hill D."/>
            <person name="Huminiecki L."/>
            <person name="Iacono M."/>
            <person name="Ikeo K."/>
            <person name="Iwama A."/>
            <person name="Ishikawa T."/>
            <person name="Jakt M."/>
            <person name="Kanapin A."/>
            <person name="Katoh M."/>
            <person name="Kawasawa Y."/>
            <person name="Kelso J."/>
            <person name="Kitamura H."/>
            <person name="Kitano H."/>
            <person name="Kollias G."/>
            <person name="Krishnan S.P."/>
            <person name="Kruger A."/>
            <person name="Kummerfeld S.K."/>
            <person name="Kurochkin I.V."/>
            <person name="Lareau L.F."/>
            <person name="Lazarevic D."/>
            <person name="Lipovich L."/>
            <person name="Liu J."/>
            <person name="Liuni S."/>
            <person name="McWilliam S."/>
            <person name="Madan Babu M."/>
            <person name="Madera M."/>
            <person name="Marchionni L."/>
            <person name="Matsuda H."/>
            <person name="Matsuzawa S."/>
            <person name="Miki H."/>
            <person name="Mignone F."/>
            <person name="Miyake S."/>
            <person name="Morris K."/>
            <person name="Mottagui-Tabar S."/>
            <person name="Mulder N."/>
            <person name="Nakano N."/>
            <person name="Nakauchi H."/>
            <person name="Ng P."/>
            <person name="Nilsson R."/>
            <person name="Nishiguchi S."/>
            <person name="Nishikawa S."/>
            <person name="Nori F."/>
            <person name="Ohara O."/>
            <person name="Okazaki Y."/>
            <person name="Orlando V."/>
            <person name="Pang K.C."/>
            <person name="Pavan W.J."/>
            <person name="Pavesi G."/>
            <person name="Pesole G."/>
            <person name="Petrovsky N."/>
            <person name="Piazza S."/>
            <person name="Reed J."/>
            <person name="Reid J.F."/>
            <person name="Ring B.Z."/>
            <person name="Ringwald M."/>
            <person name="Rost B."/>
            <person name="Ruan Y."/>
            <person name="Salzberg S.L."/>
            <person name="Sandelin A."/>
            <person name="Schneider C."/>
            <person name="Schoenbach C."/>
            <person name="Sekiguchi K."/>
            <person name="Semple C.A."/>
            <person name="Seno S."/>
            <person name="Sessa L."/>
            <person name="Sheng Y."/>
            <person name="Shibata Y."/>
            <person name="Shimada H."/>
            <person name="Shimada K."/>
            <person name="Silva D."/>
            <person name="Sinclair B."/>
            <person name="Sperling S."/>
            <person name="Stupka E."/>
            <person name="Sugiura K."/>
            <person name="Sultana R."/>
            <person name="Takenaka Y."/>
            <person name="Taki K."/>
            <person name="Tammoja K."/>
            <person name="Tan S.L."/>
            <person name="Tang S."/>
            <person name="Taylor M.S."/>
            <person name="Tegner J."/>
            <person name="Teichmann S.A."/>
            <person name="Ueda H.R."/>
            <person name="van Nimwegen E."/>
            <person name="Verardo R."/>
            <person name="Wei C.L."/>
            <person name="Yagi K."/>
            <person name="Yamanishi H."/>
            <person name="Zabarovsky E."/>
            <person name="Zhu S."/>
            <person name="Zimmer A."/>
            <person name="Hide W."/>
            <person name="Bult C."/>
            <person name="Grimmond S.M."/>
            <person name="Teasdale R.D."/>
            <person name="Liu E.T."/>
            <person name="Brusic V."/>
            <person name="Quackenbush J."/>
            <person name="Wahlestedt C."/>
            <person name="Mattick J.S."/>
            <person name="Hume D.A."/>
            <person name="Kai C."/>
            <person name="Sasaki D."/>
            <person name="Tomaru Y."/>
            <person name="Fukuda S."/>
            <person name="Kanamori-Katayama M."/>
            <person name="Suzuki M."/>
            <person name="Aoki J."/>
            <person name="Arakawa T."/>
            <person name="Iida J."/>
            <person name="Imamura K."/>
            <person name="Itoh M."/>
            <person name="Kato T."/>
            <person name="Kawaji H."/>
            <person name="Kawagashira N."/>
            <person name="Kawashima T."/>
            <person name="Kojima M."/>
            <person name="Kondo S."/>
            <person name="Konno H."/>
            <person name="Nakano K."/>
            <person name="Ninomiya N."/>
            <person name="Nishio T."/>
            <person name="Okada M."/>
            <person name="Plessy C."/>
            <person name="Shibata K."/>
            <person name="Shiraki T."/>
            <person name="Suzuki S."/>
            <person name="Tagami M."/>
            <person name="Waki K."/>
            <person name="Watahiki A."/>
            <person name="Okamura-Oho Y."/>
            <person name="Suzuki H."/>
            <person name="Kawai J."/>
            <person name="Hayashizaki Y."/>
        </authorList>
    </citation>
    <scope>NUCLEOTIDE SEQUENCE [LARGE SCALE MRNA] OF 36-900 (ISOFORM 3)</scope>
    <source>
        <tissue>Leukemia</tissue>
    </source>
</reference>
<reference key="4">
    <citation type="journal article" date="2000" name="J. Biol. Chem.">
        <title>Nectin-3: a new member of immunoglobulin-like cell adhesion molecules that shows homophilic and heterophilic cell-cell adhesion activities.</title>
        <authorList>
            <person name="Satoh-Horikawa K."/>
            <person name="Nakanishi H."/>
            <person name="Takahashi K."/>
            <person name="Miyahara M."/>
            <person name="Nishimura M."/>
            <person name="Tachibana K."/>
            <person name="Mizoguchi A."/>
            <person name="Takai Y."/>
        </authorList>
    </citation>
    <scope>INTERACTION WITH NECTIN3</scope>
</reference>
<reference key="5">
    <citation type="journal article" date="2006" name="Mol. Cell. Proteomics">
        <title>Comprehensive identification of phosphorylation sites in postsynaptic density preparations.</title>
        <authorList>
            <person name="Trinidad J.C."/>
            <person name="Specht C.G."/>
            <person name="Thalhammer A."/>
            <person name="Schoepfer R."/>
            <person name="Burlingame A.L."/>
        </authorList>
    </citation>
    <scope>IDENTIFICATION BY MASS SPECTROMETRY [LARGE SCALE ANALYSIS]</scope>
    <source>
        <tissue>Brain</tissue>
    </source>
</reference>
<reference key="6">
    <citation type="journal article" date="2007" name="Proc. Natl. Acad. Sci. U.S.A.">
        <title>Large-scale phosphorylation analysis of mouse liver.</title>
        <authorList>
            <person name="Villen J."/>
            <person name="Beausoleil S.A."/>
            <person name="Gerber S.A."/>
            <person name="Gygi S.P."/>
        </authorList>
    </citation>
    <scope>PHOSPHORYLATION [LARGE SCALE ANALYSIS] AT SER-216</scope>
    <scope>IDENTIFICATION BY MASS SPECTROMETRY [LARGE SCALE ANALYSIS]</scope>
    <source>
        <tissue>Liver</tissue>
    </source>
</reference>
<reference key="7">
    <citation type="journal article" date="2009" name="Immunity">
        <title>The phagosomal proteome in interferon-gamma-activated macrophages.</title>
        <authorList>
            <person name="Trost M."/>
            <person name="English L."/>
            <person name="Lemieux S."/>
            <person name="Courcelles M."/>
            <person name="Desjardins M."/>
            <person name="Thibault P."/>
        </authorList>
    </citation>
    <scope>PHOSPHORYLATION [LARGE SCALE ANALYSIS] AT SER-557</scope>
    <scope>IDENTIFICATION BY MASS SPECTROMETRY [LARGE SCALE ANALYSIS]</scope>
</reference>
<reference key="8">
    <citation type="journal article" date="2009" name="Mol. Cell. Proteomics">
        <title>Large scale localization of protein phosphorylation by use of electron capture dissociation mass spectrometry.</title>
        <authorList>
            <person name="Sweet S.M."/>
            <person name="Bailey C.M."/>
            <person name="Cunningham D.L."/>
            <person name="Heath J.K."/>
            <person name="Cooper H.J."/>
        </authorList>
    </citation>
    <scope>PHOSPHORYLATION [LARGE SCALE ANALYSIS] AT SER-1107 AND SER-1182</scope>
    <scope>IDENTIFICATION BY MASS SPECTROMETRY [LARGE SCALE ANALYSIS]</scope>
    <source>
        <tissue>Embryonic fibroblast</tissue>
    </source>
</reference>
<reference key="9">
    <citation type="journal article" date="2010" name="Cell">
        <title>A tissue-specific atlas of mouse protein phosphorylation and expression.</title>
        <authorList>
            <person name="Huttlin E.L."/>
            <person name="Jedrychowski M.P."/>
            <person name="Elias J.E."/>
            <person name="Goswami T."/>
            <person name="Rad R."/>
            <person name="Beausoleil S.A."/>
            <person name="Villen J."/>
            <person name="Haas W."/>
            <person name="Sowa M.E."/>
            <person name="Gygi S.P."/>
        </authorList>
    </citation>
    <scope>PHOSPHORYLATION [LARGE SCALE ANALYSIS] AT SER-216; SER-1083; SER-1107; SER-1126; SER-1143; SER-1172; SER-1182; SER-1510; SER-1719; SER-1770 AND SER-1795</scope>
    <scope>IDENTIFICATION BY MASS SPECTROMETRY [LARGE SCALE ANALYSIS]</scope>
    <source>
        <tissue>Brain</tissue>
        <tissue>Brown adipose tissue</tissue>
        <tissue>Heart</tissue>
        <tissue>Kidney</tissue>
        <tissue>Liver</tissue>
        <tissue>Lung</tissue>
        <tissue>Pancreas</tissue>
        <tissue>Spleen</tissue>
        <tissue>Testis</tissue>
    </source>
</reference>
<reference key="10">
    <citation type="journal article" date="2013" name="Mol. Cell">
        <title>SIRT5-mediated lysine desuccinylation impacts diverse metabolic pathways.</title>
        <authorList>
            <person name="Park J."/>
            <person name="Chen Y."/>
            <person name="Tishkoff D.X."/>
            <person name="Peng C."/>
            <person name="Tan M."/>
            <person name="Dai L."/>
            <person name="Xie Z."/>
            <person name="Zhang Y."/>
            <person name="Zwaans B.M."/>
            <person name="Skinner M.E."/>
            <person name="Lombard D.B."/>
            <person name="Zhao Y."/>
        </authorList>
    </citation>
    <scope>ACETYLATION [LARGE SCALE ANALYSIS] AT LYS-1803</scope>
    <scope>IDENTIFICATION BY MASS SPECTROMETRY [LARGE SCALE ANALYSIS]</scope>
    <source>
        <tissue>Embryonic fibroblast</tissue>
    </source>
</reference>
<reference key="11">
    <citation type="journal article" date="2018" name="Cell Rep.">
        <title>A Dock-and-Lock Mechanism Clusters ADAM10 at Cell-Cell Junctions to Promote alpha-Toxin Cytotoxicity.</title>
        <authorList>
            <person name="Shah J."/>
            <person name="Rouaud F."/>
            <person name="Guerrera D."/>
            <person name="Vasileva E."/>
            <person name="Popov L.M."/>
            <person name="Kelley W.L."/>
            <person name="Rubinstein E."/>
            <person name="Carette J.E."/>
            <person name="Amieva M.R."/>
            <person name="Citi S."/>
        </authorList>
    </citation>
    <scope>INTERACTION WITH ADAM10</scope>
    <scope>SUBCELLULAR LOCATION</scope>
</reference>
<reference key="12">
    <citation type="submission" date="2005-07" db="PDB data bank">
        <title>Solution structure of the FHA domain and RAS-binding domain in mouse AF-6 protein.</title>
        <authorList>
            <consortium name="RIKEN structural genomics initiative (RSGI)"/>
        </authorList>
    </citation>
    <scope>STRUCTURE BY NMR OF 246-487</scope>
</reference>
<feature type="chain" id="PRO_0000215919" description="Afadin">
    <location>
        <begin position="1"/>
        <end position="1820"/>
    </location>
</feature>
<feature type="domain" description="Ras-associating 1" evidence="6">
    <location>
        <begin position="39"/>
        <end position="133"/>
    </location>
</feature>
<feature type="domain" description="Ras-associating 2" evidence="6">
    <location>
        <begin position="246"/>
        <end position="348"/>
    </location>
</feature>
<feature type="domain" description="FHA">
    <location>
        <begin position="426"/>
        <end position="492"/>
    </location>
</feature>
<feature type="domain" description="Dilute" evidence="7">
    <location>
        <begin position="653"/>
        <end position="908"/>
    </location>
</feature>
<feature type="domain" description="PDZ" evidence="5">
    <location>
        <begin position="1007"/>
        <end position="1093"/>
    </location>
</feature>
<feature type="region of interest" description="Disordered" evidence="8">
    <location>
        <begin position="129"/>
        <end position="196"/>
    </location>
</feature>
<feature type="region of interest" description="Disordered" evidence="8">
    <location>
        <begin position="356"/>
        <end position="377"/>
    </location>
</feature>
<feature type="region of interest" description="Disordered" evidence="8">
    <location>
        <begin position="538"/>
        <end position="569"/>
    </location>
</feature>
<feature type="region of interest" description="Disordered" evidence="8">
    <location>
        <begin position="1107"/>
        <end position="1194"/>
    </location>
</feature>
<feature type="region of interest" description="Disordered" evidence="8">
    <location>
        <begin position="1203"/>
        <end position="1222"/>
    </location>
</feature>
<feature type="region of interest" description="Disordered" evidence="8">
    <location>
        <begin position="1235"/>
        <end position="1278"/>
    </location>
</feature>
<feature type="region of interest" description="Disordered" evidence="8">
    <location>
        <begin position="1308"/>
        <end position="1527"/>
    </location>
</feature>
<feature type="region of interest" description="Disordered" evidence="8">
    <location>
        <begin position="1567"/>
        <end position="1716"/>
    </location>
</feature>
<feature type="region of interest" description="Disordered" evidence="8">
    <location>
        <begin position="1734"/>
        <end position="1820"/>
    </location>
</feature>
<feature type="coiled-coil region" evidence="4">
    <location>
        <begin position="146"/>
        <end position="186"/>
    </location>
</feature>
<feature type="coiled-coil region" evidence="4">
    <location>
        <begin position="1410"/>
        <end position="1446"/>
    </location>
</feature>
<feature type="coiled-coil region" evidence="4">
    <location>
        <begin position="1523"/>
        <end position="1561"/>
    </location>
</feature>
<feature type="coiled-coil region" evidence="4">
    <location>
        <begin position="1593"/>
        <end position="1665"/>
    </location>
</feature>
<feature type="compositionally biased region" description="Basic residues" evidence="8">
    <location>
        <begin position="160"/>
        <end position="172"/>
    </location>
</feature>
<feature type="compositionally biased region" description="Basic and acidic residues" evidence="8">
    <location>
        <begin position="173"/>
        <end position="189"/>
    </location>
</feature>
<feature type="compositionally biased region" description="Basic and acidic residues" evidence="8">
    <location>
        <begin position="356"/>
        <end position="371"/>
    </location>
</feature>
<feature type="compositionally biased region" description="Basic and acidic residues" evidence="8">
    <location>
        <begin position="1113"/>
        <end position="1128"/>
    </location>
</feature>
<feature type="compositionally biased region" description="Polar residues" evidence="8">
    <location>
        <begin position="1132"/>
        <end position="1143"/>
    </location>
</feature>
<feature type="compositionally biased region" description="Basic and acidic residues" evidence="8">
    <location>
        <begin position="1152"/>
        <end position="1172"/>
    </location>
</feature>
<feature type="compositionally biased region" description="Basic and acidic residues" evidence="8">
    <location>
        <begin position="1252"/>
        <end position="1262"/>
    </location>
</feature>
<feature type="compositionally biased region" description="Low complexity" evidence="8">
    <location>
        <begin position="1309"/>
        <end position="1318"/>
    </location>
</feature>
<feature type="compositionally biased region" description="Polar residues" evidence="8">
    <location>
        <begin position="1325"/>
        <end position="1337"/>
    </location>
</feature>
<feature type="compositionally biased region" description="Pro residues" evidence="8">
    <location>
        <begin position="1364"/>
        <end position="1373"/>
    </location>
</feature>
<feature type="compositionally biased region" description="Basic and acidic residues" evidence="8">
    <location>
        <begin position="1407"/>
        <end position="1440"/>
    </location>
</feature>
<feature type="compositionally biased region" description="Polar residues" evidence="8">
    <location>
        <begin position="1443"/>
        <end position="1457"/>
    </location>
</feature>
<feature type="compositionally biased region" description="Basic and acidic residues" evidence="8">
    <location>
        <begin position="1487"/>
        <end position="1503"/>
    </location>
</feature>
<feature type="compositionally biased region" description="Basic and acidic residues" evidence="8">
    <location>
        <begin position="1513"/>
        <end position="1526"/>
    </location>
</feature>
<feature type="compositionally biased region" description="Acidic residues" evidence="8">
    <location>
        <begin position="1576"/>
        <end position="1587"/>
    </location>
</feature>
<feature type="compositionally biased region" description="Basic and acidic residues" evidence="8">
    <location>
        <begin position="1595"/>
        <end position="1675"/>
    </location>
</feature>
<feature type="compositionally biased region" description="Basic and acidic residues" evidence="8">
    <location>
        <begin position="1759"/>
        <end position="1772"/>
    </location>
</feature>
<feature type="compositionally biased region" description="Basic and acidic residues" evidence="8">
    <location>
        <begin position="1800"/>
        <end position="1820"/>
    </location>
</feature>
<feature type="modified residue" description="Phosphoserine" evidence="14 17">
    <location>
        <position position="216"/>
    </location>
</feature>
<feature type="modified residue" description="Phosphoserine" evidence="3">
    <location>
        <position position="246"/>
    </location>
</feature>
<feature type="modified residue" description="Phosphoserine" evidence="3">
    <location>
        <position position="256"/>
    </location>
</feature>
<feature type="modified residue" description="Phosphoserine" evidence="2">
    <location>
        <position position="391"/>
    </location>
</feature>
<feature type="modified residue" description="Phosphoserine" evidence="3">
    <location>
        <position position="424"/>
    </location>
</feature>
<feature type="modified residue" description="Phosphoserine" evidence="3">
    <location>
        <position position="512"/>
    </location>
</feature>
<feature type="modified residue" description="Phosphoserine" evidence="16">
    <location>
        <position position="557"/>
    </location>
</feature>
<feature type="modified residue" description="Phosphoserine" evidence="3">
    <location>
        <position position="562"/>
    </location>
</feature>
<feature type="modified residue" description="Phosphoserine" evidence="3">
    <location>
        <position position="655"/>
    </location>
</feature>
<feature type="modified residue" description="Phosphoserine" evidence="17">
    <location>
        <position position="1083"/>
    </location>
</feature>
<feature type="modified residue" description="Phosphoserine" evidence="15 17">
    <location>
        <position position="1107"/>
    </location>
</feature>
<feature type="modified residue" description="Phosphoserine" evidence="17">
    <location>
        <position position="1126"/>
    </location>
</feature>
<feature type="modified residue" description="Phosphoserine" evidence="2">
    <location>
        <position position="1140"/>
    </location>
</feature>
<feature type="modified residue" description="Phosphoserine" evidence="17">
    <location>
        <position position="1143"/>
    </location>
</feature>
<feature type="modified residue" description="Phosphoserine" evidence="17">
    <location>
        <position position="1172"/>
    </location>
</feature>
<feature type="modified residue" description="Phosphoserine" evidence="3">
    <location>
        <position position="1173"/>
    </location>
</feature>
<feature type="modified residue" description="Phosphoserine" evidence="15 17">
    <location>
        <position position="1182"/>
    </location>
</feature>
<feature type="modified residue" description="Phosphoserine" evidence="3">
    <location>
        <position position="1199"/>
    </location>
</feature>
<feature type="modified residue" description="Phosphothreonine" evidence="3">
    <location>
        <position position="1232"/>
    </location>
</feature>
<feature type="modified residue" description="Phosphoserine" evidence="3">
    <location>
        <position position="1238"/>
    </location>
</feature>
<feature type="modified residue" description="Phosphoserine" evidence="3">
    <location>
        <position position="1275"/>
    </location>
</feature>
<feature type="modified residue" description="Phosphoserine" evidence="3">
    <location>
        <position position="1328"/>
    </location>
</feature>
<feature type="modified residue" description="Phosphothreonine" evidence="3">
    <location>
        <position position="1330"/>
    </location>
</feature>
<feature type="modified residue" description="Phosphoserine" evidence="3">
    <location>
        <position position="1499"/>
    </location>
</feature>
<feature type="modified residue" description="Phosphoserine" evidence="17">
    <location>
        <position position="1510"/>
    </location>
</feature>
<feature type="modified residue" description="Phosphoserine" evidence="3">
    <location>
        <position position="1694"/>
    </location>
</feature>
<feature type="modified residue" description="Phosphoserine" evidence="17">
    <location>
        <position position="1719"/>
    </location>
</feature>
<feature type="modified residue" description="Phosphoserine" evidence="17">
    <location>
        <position position="1770"/>
    </location>
</feature>
<feature type="modified residue" description="Phosphoserine" evidence="17">
    <location>
        <position position="1795"/>
    </location>
</feature>
<feature type="modified residue" description="N6-acetyllysine" evidence="18">
    <location>
        <position position="1803"/>
    </location>
</feature>
<feature type="splice variant" id="VSP_026731" description="In isoform 1." evidence="11">
    <location>
        <begin position="393"/>
        <end position="407"/>
    </location>
</feature>
<feature type="sequence conflict" description="In Ref. 2; AAD54283." evidence="12" ref="2">
    <original>N</original>
    <variation>Y</variation>
    <location>
        <position position="23"/>
    </location>
</feature>
<feature type="sequence conflict" description="In Ref. 3; AK016557." evidence="12" ref="3">
    <original>E</original>
    <variation>EE</variation>
    <location>
        <position position="101"/>
    </location>
</feature>
<feature type="sequence conflict" description="In Ref. 3; AK016557." evidence="12" ref="3">
    <original>N</original>
    <variation>D</variation>
    <location>
        <position position="694"/>
    </location>
</feature>
<feature type="sequence conflict" description="In Ref. 3; AK016557." evidence="12" ref="3">
    <original>DLIE</original>
    <variation>PEMR</variation>
    <location>
        <begin position="897"/>
        <end position="900"/>
    </location>
</feature>
<feature type="strand" evidence="22">
    <location>
        <begin position="40"/>
        <end position="46"/>
    </location>
</feature>
<feature type="strand" evidence="22">
    <location>
        <begin position="57"/>
        <end position="63"/>
    </location>
</feature>
<feature type="helix" evidence="22">
    <location>
        <begin position="68"/>
        <end position="79"/>
    </location>
</feature>
<feature type="strand" evidence="22">
    <location>
        <begin position="91"/>
        <end position="97"/>
    </location>
</feature>
<feature type="strand" evidence="22">
    <location>
        <begin position="100"/>
        <end position="103"/>
    </location>
</feature>
<feature type="helix" evidence="22">
    <location>
        <begin position="110"/>
        <end position="114"/>
    </location>
</feature>
<feature type="strand" evidence="22">
    <location>
        <begin position="125"/>
        <end position="130"/>
    </location>
</feature>
<feature type="strand" evidence="20">
    <location>
        <begin position="249"/>
        <end position="252"/>
    </location>
</feature>
<feature type="turn" evidence="20">
    <location>
        <begin position="255"/>
        <end position="257"/>
    </location>
</feature>
<feature type="strand" evidence="20">
    <location>
        <begin position="259"/>
        <end position="261"/>
    </location>
</feature>
<feature type="strand" evidence="20">
    <location>
        <begin position="264"/>
        <end position="267"/>
    </location>
</feature>
<feature type="helix" evidence="20">
    <location>
        <begin position="274"/>
        <end position="285"/>
    </location>
</feature>
<feature type="strand" evidence="20">
    <location>
        <begin position="288"/>
        <end position="290"/>
    </location>
</feature>
<feature type="turn" evidence="20">
    <location>
        <begin position="292"/>
        <end position="294"/>
    </location>
</feature>
<feature type="strand" evidence="20">
    <location>
        <begin position="295"/>
        <end position="301"/>
    </location>
</feature>
<feature type="strand" evidence="20">
    <location>
        <begin position="308"/>
        <end position="311"/>
    </location>
</feature>
<feature type="strand" evidence="20">
    <location>
        <begin position="315"/>
        <end position="317"/>
    </location>
</feature>
<feature type="helix" evidence="20">
    <location>
        <begin position="325"/>
        <end position="330"/>
    </location>
</feature>
<feature type="helix" evidence="20">
    <location>
        <begin position="334"/>
        <end position="336"/>
    </location>
</feature>
<feature type="strand" evidence="20">
    <location>
        <begin position="339"/>
        <end position="345"/>
    </location>
</feature>
<feature type="helix" evidence="19">
    <location>
        <begin position="381"/>
        <end position="383"/>
    </location>
</feature>
<feature type="strand" evidence="19">
    <location>
        <begin position="386"/>
        <end position="390"/>
    </location>
</feature>
<feature type="strand" evidence="19">
    <location>
        <begin position="418"/>
        <end position="420"/>
    </location>
</feature>
<feature type="strand" evidence="19">
    <location>
        <begin position="423"/>
        <end position="427"/>
    </location>
</feature>
<feature type="strand" evidence="19">
    <location>
        <begin position="429"/>
        <end position="431"/>
    </location>
</feature>
<feature type="strand" evidence="19">
    <location>
        <begin position="450"/>
        <end position="457"/>
    </location>
</feature>
<feature type="strand" evidence="19">
    <location>
        <begin position="459"/>
        <end position="464"/>
    </location>
</feature>
<feature type="strand" evidence="19">
    <location>
        <begin position="466"/>
        <end position="468"/>
    </location>
</feature>
<feature type="strand" evidence="19">
    <location>
        <begin position="470"/>
        <end position="474"/>
    </location>
</feature>
<feature type="strand" evidence="19">
    <location>
        <begin position="481"/>
        <end position="483"/>
    </location>
</feature>
<feature type="strand" evidence="19">
    <location>
        <begin position="488"/>
        <end position="491"/>
    </location>
</feature>
<feature type="turn" evidence="19">
    <location>
        <begin position="492"/>
        <end position="494"/>
    </location>
</feature>
<feature type="strand" evidence="19">
    <location>
        <begin position="495"/>
        <end position="500"/>
    </location>
</feature>
<feature type="strand" evidence="21">
    <location>
        <begin position="1007"/>
        <end position="1013"/>
    </location>
</feature>
<feature type="strand" evidence="21">
    <location>
        <begin position="1015"/>
        <end position="1017"/>
    </location>
</feature>
<feature type="strand" evidence="21">
    <location>
        <begin position="1019"/>
        <end position="1026"/>
    </location>
</feature>
<feature type="strand" evidence="21">
    <location>
        <begin position="1031"/>
        <end position="1041"/>
    </location>
</feature>
<feature type="helix" evidence="21">
    <location>
        <begin position="1045"/>
        <end position="1049"/>
    </location>
</feature>
<feature type="strand" evidence="21">
    <location>
        <begin position="1057"/>
        <end position="1061"/>
    </location>
</feature>
<feature type="helix" evidence="21">
    <location>
        <begin position="1071"/>
        <end position="1079"/>
    </location>
</feature>
<feature type="strand" evidence="21">
    <location>
        <begin position="1083"/>
        <end position="1090"/>
    </location>
</feature>